<name>RRF_THET8</name>
<reference key="1">
    <citation type="journal article" date="1999" name="FEBS Lett.">
        <title>Amber mutations in ribosome recycling factors of Escherichia coli and Thermus thermophilus: evidence for C-terminal modulator element.</title>
        <authorList>
            <person name="Fujiwara T."/>
            <person name="Ito K."/>
            <person name="Nakayashiki T."/>
            <person name="Nakamura Y."/>
        </authorList>
    </citation>
    <scope>NUCLEOTIDE SEQUENCE [GENOMIC DNA]</scope>
</reference>
<reference key="2">
    <citation type="submission" date="2004-11" db="EMBL/GenBank/DDBJ databases">
        <title>Complete genome sequence of Thermus thermophilus HB8.</title>
        <authorList>
            <person name="Masui R."/>
            <person name="Kurokawa K."/>
            <person name="Nakagawa N."/>
            <person name="Tokunaga F."/>
            <person name="Koyama Y."/>
            <person name="Shibata T."/>
            <person name="Oshima T."/>
            <person name="Yokoyama S."/>
            <person name="Yasunaga T."/>
            <person name="Kuramitsu S."/>
        </authorList>
    </citation>
    <scope>NUCLEOTIDE SEQUENCE [LARGE SCALE GENOMIC DNA]</scope>
    <source>
        <strain>ATCC 27634 / DSM 579 / HB8</strain>
    </source>
</reference>
<reference key="3">
    <citation type="journal article" date="2000" name="RNA">
        <title>Crystal structure combined with genetic analysis of the Thermus thermophilus ribosome recycling factor shows that a flexible hinge may act as a functional switch.</title>
        <authorList>
            <person name="Toyoda T."/>
            <person name="Tin O.F."/>
            <person name="Ito K."/>
            <person name="Fujiwara T."/>
            <person name="Kumasaka T."/>
            <person name="Yamamoto M."/>
            <person name="Garber M.B."/>
            <person name="Nakamura Y."/>
        </authorList>
    </citation>
    <scope>X-RAY CRYSTALLOGRAPHY (2.6 ANGSTROMS)</scope>
</reference>
<proteinExistence type="evidence at protein level"/>
<keyword id="KW-0002">3D-structure</keyword>
<keyword id="KW-0963">Cytoplasm</keyword>
<keyword id="KW-0648">Protein biosynthesis</keyword>
<keyword id="KW-1185">Reference proteome</keyword>
<organism>
    <name type="scientific">Thermus thermophilus (strain ATCC 27634 / DSM 579 / HB8)</name>
    <dbReference type="NCBI Taxonomy" id="300852"/>
    <lineage>
        <taxon>Bacteria</taxon>
        <taxon>Thermotogati</taxon>
        <taxon>Deinococcota</taxon>
        <taxon>Deinococci</taxon>
        <taxon>Thermales</taxon>
        <taxon>Thermaceae</taxon>
        <taxon>Thermus</taxon>
    </lineage>
</organism>
<accession>Q9WX76</accession>
<accession>Q5SJZ4</accession>
<sequence>MTLKELYAETRSHMQKSLEVLEHNLAGLRTGRANPALLLHLKVEYYGAHVPLNQIATVTAPDPRTLVVQSWDQNALKAIEKAIRDSDLGLNPSNKGDALYINIPPLTEERRKDLVRAVRQYAEEGRVAIRNIRREALDKLKKLAKELHLSEDETKRAEAEIQKITDEFIAKADQLAEKKEQEILG</sequence>
<comment type="function">
    <text evidence="1">Responsible for the release of ribosomes from messenger RNA at the termination of protein biosynthesis. May increase the efficiency of translation by recycling ribosomes from one round of translation to another.</text>
</comment>
<comment type="subcellular location">
    <subcellularLocation>
        <location evidence="1">Cytoplasm</location>
    </subcellularLocation>
</comment>
<comment type="similarity">
    <text evidence="1">Belongs to the RRF family.</text>
</comment>
<protein>
    <recommendedName>
        <fullName evidence="1">Ribosome-recycling factor</fullName>
        <shortName evidence="1">RRF</shortName>
    </recommendedName>
    <alternativeName>
        <fullName evidence="1">Ribosome-releasing factor</fullName>
    </alternativeName>
</protein>
<feature type="chain" id="PRO_0000167567" description="Ribosome-recycling factor">
    <location>
        <begin position="1"/>
        <end position="185"/>
    </location>
</feature>
<feature type="helix" evidence="2">
    <location>
        <begin position="3"/>
        <end position="26"/>
    </location>
</feature>
<feature type="helix" evidence="2">
    <location>
        <begin position="36"/>
        <end position="38"/>
    </location>
</feature>
<feature type="strand" evidence="2">
    <location>
        <begin position="42"/>
        <end position="45"/>
    </location>
</feature>
<feature type="strand" evidence="2">
    <location>
        <begin position="48"/>
        <end position="51"/>
    </location>
</feature>
<feature type="helix" evidence="2">
    <location>
        <begin position="52"/>
        <end position="54"/>
    </location>
</feature>
<feature type="strand" evidence="2">
    <location>
        <begin position="57"/>
        <end position="59"/>
    </location>
</feature>
<feature type="strand" evidence="2">
    <location>
        <begin position="65"/>
        <end position="69"/>
    </location>
</feature>
<feature type="helix" evidence="2">
    <location>
        <begin position="73"/>
        <end position="83"/>
    </location>
</feature>
<feature type="strand" evidence="2">
    <location>
        <begin position="84"/>
        <end position="86"/>
    </location>
</feature>
<feature type="strand" evidence="2">
    <location>
        <begin position="92"/>
        <end position="95"/>
    </location>
</feature>
<feature type="strand" evidence="2">
    <location>
        <begin position="98"/>
        <end position="102"/>
    </location>
</feature>
<feature type="helix" evidence="2">
    <location>
        <begin position="110"/>
        <end position="147"/>
    </location>
</feature>
<feature type="helix" evidence="2">
    <location>
        <begin position="151"/>
        <end position="183"/>
    </location>
</feature>
<dbReference type="EMBL" id="AB016498">
    <property type="protein sequence ID" value="BAA76865.1"/>
    <property type="molecule type" value="Genomic_DNA"/>
</dbReference>
<dbReference type="EMBL" id="AP008226">
    <property type="protein sequence ID" value="BAD70681.1"/>
    <property type="molecule type" value="Genomic_DNA"/>
</dbReference>
<dbReference type="RefSeq" id="WP_011172951.1">
    <property type="nucleotide sequence ID" value="NC_006461.1"/>
</dbReference>
<dbReference type="RefSeq" id="YP_144124.1">
    <property type="nucleotide sequence ID" value="NC_006461.1"/>
</dbReference>
<dbReference type="PDB" id="1EH1">
    <property type="method" value="X-ray"/>
    <property type="resolution" value="2.60 A"/>
    <property type="chains" value="A=1-185"/>
</dbReference>
<dbReference type="PDB" id="3J0D">
    <property type="method" value="EM"/>
    <property type="resolution" value="11.10 A"/>
    <property type="chains" value="J=1-185"/>
</dbReference>
<dbReference type="PDB" id="3J0E">
    <property type="method" value="EM"/>
    <property type="resolution" value="9.90 A"/>
    <property type="chains" value="G=1-185"/>
</dbReference>
<dbReference type="PDB" id="4V54">
    <property type="method" value="X-ray"/>
    <property type="resolution" value="3.30 A"/>
    <property type="chains" value="B6/D6=1-185"/>
</dbReference>
<dbReference type="PDB" id="4V55">
    <property type="method" value="X-ray"/>
    <property type="resolution" value="4.00 A"/>
    <property type="chains" value="B6/D6=1-185"/>
</dbReference>
<dbReference type="PDB" id="4V5A">
    <property type="method" value="X-ray"/>
    <property type="resolution" value="3.50 A"/>
    <property type="chains" value="AY/CY=1-185"/>
</dbReference>
<dbReference type="PDB" id="4V5Y">
    <property type="method" value="X-ray"/>
    <property type="resolution" value="4.45 A"/>
    <property type="chains" value="B6/D6=1-185"/>
</dbReference>
<dbReference type="PDB" id="6UCQ">
    <property type="method" value="X-ray"/>
    <property type="resolution" value="3.50 A"/>
    <property type="chains" value="1w/2w=1-185"/>
</dbReference>
<dbReference type="PDBsum" id="1EH1"/>
<dbReference type="PDBsum" id="3J0D"/>
<dbReference type="PDBsum" id="3J0E"/>
<dbReference type="PDBsum" id="4V54"/>
<dbReference type="PDBsum" id="4V55"/>
<dbReference type="PDBsum" id="4V5A"/>
<dbReference type="PDBsum" id="4V5Y"/>
<dbReference type="PDBsum" id="6UCQ"/>
<dbReference type="BMRB" id="Q9WX76"/>
<dbReference type="EMDB" id="EMD-1915"/>
<dbReference type="EMDB" id="EMD-1916"/>
<dbReference type="SMR" id="Q9WX76"/>
<dbReference type="IntAct" id="Q9WX76">
    <property type="interactions" value="3"/>
</dbReference>
<dbReference type="EnsemblBacteria" id="BAD70681">
    <property type="protein sequence ID" value="BAD70681"/>
    <property type="gene ID" value="BAD70681"/>
</dbReference>
<dbReference type="GeneID" id="3170111"/>
<dbReference type="KEGG" id="ttj:TTHA0858"/>
<dbReference type="PATRIC" id="fig|300852.9.peg.852"/>
<dbReference type="eggNOG" id="COG0233">
    <property type="taxonomic scope" value="Bacteria"/>
</dbReference>
<dbReference type="HOGENOM" id="CLU_073981_2_0_0"/>
<dbReference type="PhylomeDB" id="Q9WX76"/>
<dbReference type="EvolutionaryTrace" id="Q9WX76"/>
<dbReference type="Proteomes" id="UP000000532">
    <property type="component" value="Chromosome"/>
</dbReference>
<dbReference type="GO" id="GO:0005737">
    <property type="term" value="C:cytoplasm"/>
    <property type="evidence" value="ECO:0007669"/>
    <property type="project" value="UniProtKB-SubCell"/>
</dbReference>
<dbReference type="GO" id="GO:0043023">
    <property type="term" value="F:ribosomal large subunit binding"/>
    <property type="evidence" value="ECO:0007669"/>
    <property type="project" value="TreeGrafter"/>
</dbReference>
<dbReference type="GO" id="GO:0006415">
    <property type="term" value="P:translational termination"/>
    <property type="evidence" value="ECO:0007669"/>
    <property type="project" value="UniProtKB-UniRule"/>
</dbReference>
<dbReference type="CDD" id="cd00520">
    <property type="entry name" value="RRF"/>
    <property type="match status" value="1"/>
</dbReference>
<dbReference type="FunFam" id="1.10.132.20:FF:000001">
    <property type="entry name" value="Ribosome-recycling factor"/>
    <property type="match status" value="1"/>
</dbReference>
<dbReference type="FunFam" id="3.30.1360.40:FF:000001">
    <property type="entry name" value="Ribosome-recycling factor"/>
    <property type="match status" value="1"/>
</dbReference>
<dbReference type="Gene3D" id="3.30.1360.40">
    <property type="match status" value="1"/>
</dbReference>
<dbReference type="Gene3D" id="1.10.132.20">
    <property type="entry name" value="Ribosome-recycling factor"/>
    <property type="match status" value="1"/>
</dbReference>
<dbReference type="HAMAP" id="MF_00040">
    <property type="entry name" value="RRF"/>
    <property type="match status" value="1"/>
</dbReference>
<dbReference type="InterPro" id="IPR002661">
    <property type="entry name" value="Ribosome_recyc_fac"/>
</dbReference>
<dbReference type="InterPro" id="IPR023584">
    <property type="entry name" value="Ribosome_recyc_fac_dom"/>
</dbReference>
<dbReference type="InterPro" id="IPR036191">
    <property type="entry name" value="RRF_sf"/>
</dbReference>
<dbReference type="NCBIfam" id="TIGR00496">
    <property type="entry name" value="frr"/>
    <property type="match status" value="1"/>
</dbReference>
<dbReference type="PANTHER" id="PTHR20982:SF3">
    <property type="entry name" value="MITOCHONDRIAL RIBOSOME RECYCLING FACTOR PSEUDO 1"/>
    <property type="match status" value="1"/>
</dbReference>
<dbReference type="PANTHER" id="PTHR20982">
    <property type="entry name" value="RIBOSOME RECYCLING FACTOR"/>
    <property type="match status" value="1"/>
</dbReference>
<dbReference type="Pfam" id="PF01765">
    <property type="entry name" value="RRF"/>
    <property type="match status" value="1"/>
</dbReference>
<dbReference type="SUPFAM" id="SSF55194">
    <property type="entry name" value="Ribosome recycling factor, RRF"/>
    <property type="match status" value="1"/>
</dbReference>
<gene>
    <name evidence="1" type="primary">frr</name>
    <name type="ordered locus">TTHA0858</name>
</gene>
<evidence type="ECO:0000255" key="1">
    <source>
        <dbReference type="HAMAP-Rule" id="MF_00040"/>
    </source>
</evidence>
<evidence type="ECO:0007829" key="2">
    <source>
        <dbReference type="PDB" id="1EH1"/>
    </source>
</evidence>